<gene>
    <name type="primary">hibA</name>
    <name type="ORF">DDB_G0292566</name>
</gene>
<proteinExistence type="inferred from homology"/>
<keyword id="KW-0101">Branched-chain amino acid catabolism</keyword>
<keyword id="KW-0496">Mitochondrion</keyword>
<keyword id="KW-0520">NAD</keyword>
<keyword id="KW-0560">Oxidoreductase</keyword>
<keyword id="KW-1185">Reference proteome</keyword>
<keyword id="KW-0809">Transit peptide</keyword>
<sequence>MFSSKKSLLLFKNVRYMSTSSSKTVGFIGLGNMGGHQAINLIKKGHNLIVFDMSKDNMNRLKEKGAKIANSPAEVAKEADVIVTMLPASAHVKNVYCGENGIFQTVRPGTLLLDSSTIDPATAREVASIAKKHQSTMLDCPVSGGTGGAEAGTLTFMVGGSEQDFNTAKTYLECMGKNIVHCGDVGTGQVAKVCNNLVLGISMIAVSEAMNLGVKQGMDPKKLAGIFNTSSARCWTSELYNPCPGVIETSPASRGYTGGFGSALMTKDLGLAVDSAKSIGEPLLLGNSAHQLYTLLVAKGDGQKDFSVVYDFLNKNFKNSN</sequence>
<accession>Q54CX6</accession>
<feature type="transit peptide" description="Mitochondrion" evidence="1">
    <location>
        <begin position="1"/>
        <end status="unknown"/>
    </location>
</feature>
<feature type="chain" id="PRO_0000327881" description="Probable 3-hydroxyisobutyrate dehydrogenase, mitochondrial">
    <location>
        <begin status="unknown"/>
        <end position="321"/>
    </location>
</feature>
<feature type="active site" evidence="1">
    <location>
        <position position="192"/>
    </location>
</feature>
<feature type="binding site" evidence="1">
    <location>
        <begin position="23"/>
        <end position="52"/>
    </location>
    <ligand>
        <name>NAD(+)</name>
        <dbReference type="ChEBI" id="CHEBI:57540"/>
    </ligand>
</feature>
<feature type="binding site" evidence="1">
    <location>
        <begin position="86"/>
        <end position="87"/>
    </location>
    <ligand>
        <name>NAD(+)</name>
        <dbReference type="ChEBI" id="CHEBI:57540"/>
    </ligand>
</feature>
<feature type="binding site" evidence="1">
    <location>
        <position position="117"/>
    </location>
    <ligand>
        <name>NAD(+)</name>
        <dbReference type="ChEBI" id="CHEBI:57540"/>
    </ligand>
</feature>
<feature type="binding site" evidence="1">
    <location>
        <position position="267"/>
    </location>
    <ligand>
        <name>NAD(+)</name>
        <dbReference type="ChEBI" id="CHEBI:57540"/>
    </ligand>
</feature>
<organism>
    <name type="scientific">Dictyostelium discoideum</name>
    <name type="common">Social amoeba</name>
    <dbReference type="NCBI Taxonomy" id="44689"/>
    <lineage>
        <taxon>Eukaryota</taxon>
        <taxon>Amoebozoa</taxon>
        <taxon>Evosea</taxon>
        <taxon>Eumycetozoa</taxon>
        <taxon>Dictyostelia</taxon>
        <taxon>Dictyosteliales</taxon>
        <taxon>Dictyosteliaceae</taxon>
        <taxon>Dictyostelium</taxon>
    </lineage>
</organism>
<reference key="1">
    <citation type="journal article" date="2005" name="Nature">
        <title>The genome of the social amoeba Dictyostelium discoideum.</title>
        <authorList>
            <person name="Eichinger L."/>
            <person name="Pachebat J.A."/>
            <person name="Gloeckner G."/>
            <person name="Rajandream M.A."/>
            <person name="Sucgang R."/>
            <person name="Berriman M."/>
            <person name="Song J."/>
            <person name="Olsen R."/>
            <person name="Szafranski K."/>
            <person name="Xu Q."/>
            <person name="Tunggal B."/>
            <person name="Kummerfeld S."/>
            <person name="Madera M."/>
            <person name="Konfortov B.A."/>
            <person name="Rivero F."/>
            <person name="Bankier A.T."/>
            <person name="Lehmann R."/>
            <person name="Hamlin N."/>
            <person name="Davies R."/>
            <person name="Gaudet P."/>
            <person name="Fey P."/>
            <person name="Pilcher K."/>
            <person name="Chen G."/>
            <person name="Saunders D."/>
            <person name="Sodergren E.J."/>
            <person name="Davis P."/>
            <person name="Kerhornou A."/>
            <person name="Nie X."/>
            <person name="Hall N."/>
            <person name="Anjard C."/>
            <person name="Hemphill L."/>
            <person name="Bason N."/>
            <person name="Farbrother P."/>
            <person name="Desany B."/>
            <person name="Just E."/>
            <person name="Morio T."/>
            <person name="Rost R."/>
            <person name="Churcher C.M."/>
            <person name="Cooper J."/>
            <person name="Haydock S."/>
            <person name="van Driessche N."/>
            <person name="Cronin A."/>
            <person name="Goodhead I."/>
            <person name="Muzny D.M."/>
            <person name="Mourier T."/>
            <person name="Pain A."/>
            <person name="Lu M."/>
            <person name="Harper D."/>
            <person name="Lindsay R."/>
            <person name="Hauser H."/>
            <person name="James K.D."/>
            <person name="Quiles M."/>
            <person name="Madan Babu M."/>
            <person name="Saito T."/>
            <person name="Buchrieser C."/>
            <person name="Wardroper A."/>
            <person name="Felder M."/>
            <person name="Thangavelu M."/>
            <person name="Johnson D."/>
            <person name="Knights A."/>
            <person name="Loulseged H."/>
            <person name="Mungall K.L."/>
            <person name="Oliver K."/>
            <person name="Price C."/>
            <person name="Quail M.A."/>
            <person name="Urushihara H."/>
            <person name="Hernandez J."/>
            <person name="Rabbinowitsch E."/>
            <person name="Steffen D."/>
            <person name="Sanders M."/>
            <person name="Ma J."/>
            <person name="Kohara Y."/>
            <person name="Sharp S."/>
            <person name="Simmonds M.N."/>
            <person name="Spiegler S."/>
            <person name="Tivey A."/>
            <person name="Sugano S."/>
            <person name="White B."/>
            <person name="Walker D."/>
            <person name="Woodward J.R."/>
            <person name="Winckler T."/>
            <person name="Tanaka Y."/>
            <person name="Shaulsky G."/>
            <person name="Schleicher M."/>
            <person name="Weinstock G.M."/>
            <person name="Rosenthal A."/>
            <person name="Cox E.C."/>
            <person name="Chisholm R.L."/>
            <person name="Gibbs R.A."/>
            <person name="Loomis W.F."/>
            <person name="Platzer M."/>
            <person name="Kay R.R."/>
            <person name="Williams J.G."/>
            <person name="Dear P.H."/>
            <person name="Noegel A.A."/>
            <person name="Barrell B.G."/>
            <person name="Kuspa A."/>
        </authorList>
    </citation>
    <scope>NUCLEOTIDE SEQUENCE [LARGE SCALE GENOMIC DNA]</scope>
    <source>
        <strain>AX4</strain>
    </source>
</reference>
<comment type="catalytic activity">
    <reaction>
        <text>3-hydroxy-2-methylpropanoate + NAD(+) = 2-methyl-3-oxopropanoate + NADH + H(+)</text>
        <dbReference type="Rhea" id="RHEA:17681"/>
        <dbReference type="ChEBI" id="CHEBI:11805"/>
        <dbReference type="ChEBI" id="CHEBI:15378"/>
        <dbReference type="ChEBI" id="CHEBI:57540"/>
        <dbReference type="ChEBI" id="CHEBI:57700"/>
        <dbReference type="ChEBI" id="CHEBI:57945"/>
        <dbReference type="EC" id="1.1.1.31"/>
    </reaction>
</comment>
<comment type="pathway">
    <text>Amino-acid degradation; L-valine degradation.</text>
</comment>
<comment type="subcellular location">
    <subcellularLocation>
        <location evidence="1">Mitochondrion</location>
    </subcellularLocation>
</comment>
<comment type="similarity">
    <text evidence="2">Belongs to the HIBADH-related family. 3-hydroxyisobutyrate dehydrogenase subfamily.</text>
</comment>
<dbReference type="EC" id="1.1.1.31"/>
<dbReference type="EMBL" id="AAFI02000194">
    <property type="protein sequence ID" value="EAL61086.1"/>
    <property type="molecule type" value="Genomic_DNA"/>
</dbReference>
<dbReference type="RefSeq" id="XP_629544.1">
    <property type="nucleotide sequence ID" value="XM_629542.1"/>
</dbReference>
<dbReference type="SMR" id="Q54CX6"/>
<dbReference type="FunCoup" id="Q54CX6">
    <property type="interactions" value="440"/>
</dbReference>
<dbReference type="STRING" id="44689.Q54CX6"/>
<dbReference type="PaxDb" id="44689-DDB0216217"/>
<dbReference type="EnsemblProtists" id="EAL61086">
    <property type="protein sequence ID" value="EAL61086"/>
    <property type="gene ID" value="DDB_G0292566"/>
</dbReference>
<dbReference type="GeneID" id="8628802"/>
<dbReference type="KEGG" id="ddi:DDB_G0292566"/>
<dbReference type="dictyBase" id="DDB_G0292566">
    <property type="gene designation" value="hibA"/>
</dbReference>
<dbReference type="VEuPathDB" id="AmoebaDB:DDB_G0292566"/>
<dbReference type="eggNOG" id="KOG0409">
    <property type="taxonomic scope" value="Eukaryota"/>
</dbReference>
<dbReference type="HOGENOM" id="CLU_035117_6_0_1"/>
<dbReference type="InParanoid" id="Q54CX6"/>
<dbReference type="OMA" id="MGKKVWH"/>
<dbReference type="PhylomeDB" id="Q54CX6"/>
<dbReference type="Reactome" id="R-DDI-70895">
    <property type="pathway name" value="Branched-chain amino acid catabolism"/>
</dbReference>
<dbReference type="UniPathway" id="UPA00362"/>
<dbReference type="PRO" id="PR:Q54CX6"/>
<dbReference type="Proteomes" id="UP000002195">
    <property type="component" value="Chromosome 6"/>
</dbReference>
<dbReference type="GO" id="GO:0005739">
    <property type="term" value="C:mitochondrion"/>
    <property type="evidence" value="ECO:0000318"/>
    <property type="project" value="GO_Central"/>
</dbReference>
<dbReference type="GO" id="GO:0008442">
    <property type="term" value="F:3-hydroxyisobutyrate dehydrogenase activity"/>
    <property type="evidence" value="ECO:0000318"/>
    <property type="project" value="GO_Central"/>
</dbReference>
<dbReference type="GO" id="GO:0051287">
    <property type="term" value="F:NAD binding"/>
    <property type="evidence" value="ECO:0007669"/>
    <property type="project" value="InterPro"/>
</dbReference>
<dbReference type="GO" id="GO:0050661">
    <property type="term" value="F:NADP binding"/>
    <property type="evidence" value="ECO:0007669"/>
    <property type="project" value="InterPro"/>
</dbReference>
<dbReference type="GO" id="GO:0006574">
    <property type="term" value="P:valine catabolic process"/>
    <property type="evidence" value="ECO:0000318"/>
    <property type="project" value="GO_Central"/>
</dbReference>
<dbReference type="FunFam" id="1.10.1040.10:FF:000006">
    <property type="entry name" value="3-hydroxyisobutyrate dehydrogenase"/>
    <property type="match status" value="1"/>
</dbReference>
<dbReference type="FunFam" id="3.40.50.720:FF:000119">
    <property type="entry name" value="3-hydroxyisobutyrate dehydrogenase"/>
    <property type="match status" value="1"/>
</dbReference>
<dbReference type="Gene3D" id="1.10.1040.10">
    <property type="entry name" value="N-(1-d-carboxylethyl)-l-norvaline Dehydrogenase, domain 2"/>
    <property type="match status" value="1"/>
</dbReference>
<dbReference type="Gene3D" id="3.40.50.720">
    <property type="entry name" value="NAD(P)-binding Rossmann-like Domain"/>
    <property type="match status" value="1"/>
</dbReference>
<dbReference type="InterPro" id="IPR008927">
    <property type="entry name" value="6-PGluconate_DH-like_C_sf"/>
</dbReference>
<dbReference type="InterPro" id="IPR013328">
    <property type="entry name" value="6PGD_dom2"/>
</dbReference>
<dbReference type="InterPro" id="IPR006115">
    <property type="entry name" value="6PGDH_NADP-bd"/>
</dbReference>
<dbReference type="InterPro" id="IPR011548">
    <property type="entry name" value="HIBADH"/>
</dbReference>
<dbReference type="InterPro" id="IPR029154">
    <property type="entry name" value="HIBADH-like_NADP-bd"/>
</dbReference>
<dbReference type="InterPro" id="IPR015815">
    <property type="entry name" value="HIBADH-related"/>
</dbReference>
<dbReference type="InterPro" id="IPR036291">
    <property type="entry name" value="NAD(P)-bd_dom_sf"/>
</dbReference>
<dbReference type="NCBIfam" id="TIGR01692">
    <property type="entry name" value="HIBADH"/>
    <property type="match status" value="1"/>
</dbReference>
<dbReference type="PANTHER" id="PTHR22981:SF7">
    <property type="entry name" value="3-HYDROXYISOBUTYRATE DEHYDROGENASE, MITOCHONDRIAL"/>
    <property type="match status" value="1"/>
</dbReference>
<dbReference type="PANTHER" id="PTHR22981">
    <property type="entry name" value="3-HYDROXYISOBUTYRATE DEHYDROGENASE-RELATED"/>
    <property type="match status" value="1"/>
</dbReference>
<dbReference type="Pfam" id="PF14833">
    <property type="entry name" value="NAD_binding_11"/>
    <property type="match status" value="1"/>
</dbReference>
<dbReference type="Pfam" id="PF03446">
    <property type="entry name" value="NAD_binding_2"/>
    <property type="match status" value="1"/>
</dbReference>
<dbReference type="PIRSF" id="PIRSF000103">
    <property type="entry name" value="HIBADH"/>
    <property type="match status" value="1"/>
</dbReference>
<dbReference type="SUPFAM" id="SSF48179">
    <property type="entry name" value="6-phosphogluconate dehydrogenase C-terminal domain-like"/>
    <property type="match status" value="1"/>
</dbReference>
<dbReference type="SUPFAM" id="SSF51735">
    <property type="entry name" value="NAD(P)-binding Rossmann-fold domains"/>
    <property type="match status" value="1"/>
</dbReference>
<name>3HIDH_DICDI</name>
<evidence type="ECO:0000250" key="1"/>
<evidence type="ECO:0000305" key="2"/>
<protein>
    <recommendedName>
        <fullName>Probable 3-hydroxyisobutyrate dehydrogenase, mitochondrial</fullName>
        <shortName>HIBADH</shortName>
        <ecNumber>1.1.1.31</ecNumber>
    </recommendedName>
</protein>